<proteinExistence type="evidence at protein level"/>
<feature type="initiator methionine" description="Removed; by host" evidence="1">
    <location>
        <position position="1"/>
    </location>
</feature>
<feature type="chain" id="PRO_0000457645" description="Entry-fusion complex associated protein OPG095">
    <location>
        <begin position="2"/>
        <end position="250"/>
    </location>
</feature>
<feature type="topological domain" description="Virion surface" evidence="2">
    <location>
        <begin position="2"/>
        <end position="183"/>
    </location>
</feature>
<feature type="transmembrane region" description="Helical" evidence="2">
    <location>
        <begin position="184"/>
        <end position="204"/>
    </location>
</feature>
<feature type="topological domain" description="Intravirion" evidence="2">
    <location>
        <begin position="205"/>
        <end position="250"/>
    </location>
</feature>
<feature type="region of interest" description="Targeting to MV membrane" evidence="1">
    <location>
        <begin position="2"/>
        <end position="12"/>
    </location>
</feature>
<feature type="lipid moiety-binding region" description="N-myristoyl glycine; by host" evidence="1">
    <location>
        <position position="2"/>
    </location>
</feature>
<feature type="disulfide bond" description="by OPG088" evidence="1">
    <location>
        <begin position="34"/>
        <end position="57"/>
    </location>
</feature>
<feature type="disulfide bond" description="by OPG088" evidence="1">
    <location>
        <begin position="49"/>
        <end position="136"/>
    </location>
</feature>
<feature type="disulfide bond" description="by OPG088" evidence="1">
    <location>
        <begin position="116"/>
        <end position="158"/>
    </location>
</feature>
<protein>
    <recommendedName>
        <fullName>Entry-fusion complex associated protein OPG095</fullName>
    </recommendedName>
    <alternativeName>
        <fullName>EFC-associated protein OPG095</fullName>
    </alternativeName>
    <alternativeName>
        <fullName>Protein L1</fullName>
    </alternativeName>
</protein>
<comment type="function">
    <text evidence="1">Component of the entry fusion complex (EFC), which consists of 11 proteins. During cell infection, this complex mediates entry of the virion core into the host cytoplasm by a two-step mechanism consisting of lipid mixing of the viral and cellular membranes and subsequent pore formation.</text>
</comment>
<comment type="subunit">
    <text evidence="1">Component of the entry fusion complex (EFC) composed of OPG053, OPG076, OPG086, OPG094, OPG095, OPG099, OPG107, OPG143, OPG104, OPG147 and OPG155. Except for OPG095 and OPG053, each of the EFC proteins is required for assembly or stability of the complex.</text>
</comment>
<comment type="subcellular location">
    <subcellularLocation>
        <location evidence="1">Virion membrane</location>
        <topology evidence="1">Single-pass membrane protein</topology>
    </subcellularLocation>
    <text evidence="1">Localizes to the membrane surrounding the core of mature virus particles (MV).</text>
</comment>
<comment type="induction">
    <text evidence="1">Expressed in the late phase of the viral replicative cycle.</text>
</comment>
<comment type="PTM">
    <text evidence="1">Myristoylated.</text>
</comment>
<comment type="PTM">
    <text evidence="1">Disulfid bonds are oxidized in the cytoplasm by OPG088 protein.</text>
</comment>
<comment type="PTM">
    <text evidence="1">Unglycosylated because produced in viral factories instead of the classic ER -Golgi route.</text>
</comment>
<comment type="similarity">
    <text evidence="3">Belongs to the orthopoxvirus OPG095 family.</text>
</comment>
<gene>
    <name type="primary">OPG099</name>
    <name type="ORF">MPXVgp080</name>
</gene>
<organism evidence="4">
    <name type="scientific">Monkeypox virus</name>
    <dbReference type="NCBI Taxonomy" id="10244"/>
    <lineage>
        <taxon>Viruses</taxon>
        <taxon>Varidnaviria</taxon>
        <taxon>Bamfordvirae</taxon>
        <taxon>Nucleocytoviricota</taxon>
        <taxon>Pokkesviricetes</taxon>
        <taxon>Chitovirales</taxon>
        <taxon>Poxviridae</taxon>
        <taxon>Chordopoxvirinae</taxon>
        <taxon>Orthopoxvirus</taxon>
    </lineage>
</organism>
<dbReference type="EMBL" id="KC257461">
    <property type="protein sequence ID" value="AGF36984.1"/>
    <property type="molecule type" value="Genomic_DNA"/>
</dbReference>
<dbReference type="EMBL" id="MT903340">
    <property type="protein sequence ID" value="QNP12950.1"/>
    <property type="molecule type" value="Genomic_DNA"/>
</dbReference>
<dbReference type="PDB" id="9J7Y">
    <property type="method" value="X-ray"/>
    <property type="resolution" value="2.59 A"/>
    <property type="chains" value="G=1-181"/>
</dbReference>
<dbReference type="PDBsum" id="9J7Y"/>
<dbReference type="SMR" id="M1LBP0"/>
<dbReference type="KEGG" id="vg:928968"/>
<dbReference type="Proteomes" id="UP000516359">
    <property type="component" value="Genome"/>
</dbReference>
<dbReference type="GO" id="GO:0016020">
    <property type="term" value="C:membrane"/>
    <property type="evidence" value="ECO:0007669"/>
    <property type="project" value="UniProtKB-KW"/>
</dbReference>
<dbReference type="GO" id="GO:0019031">
    <property type="term" value="C:viral envelope"/>
    <property type="evidence" value="ECO:0007669"/>
    <property type="project" value="UniProtKB-KW"/>
</dbReference>
<dbReference type="GO" id="GO:0055036">
    <property type="term" value="C:virion membrane"/>
    <property type="evidence" value="ECO:0007669"/>
    <property type="project" value="UniProtKB-SubCell"/>
</dbReference>
<dbReference type="GO" id="GO:0046718">
    <property type="term" value="P:symbiont entry into host cell"/>
    <property type="evidence" value="ECO:0007669"/>
    <property type="project" value="UniProtKB-KW"/>
</dbReference>
<dbReference type="GO" id="GO:0019062">
    <property type="term" value="P:virion attachment to host cell"/>
    <property type="evidence" value="ECO:0007669"/>
    <property type="project" value="UniProtKB-KW"/>
</dbReference>
<dbReference type="InterPro" id="IPR003472">
    <property type="entry name" value="Virion_mem_poxvirus_L1"/>
</dbReference>
<dbReference type="Pfam" id="PF02442">
    <property type="entry name" value="L1R_F9L"/>
    <property type="match status" value="1"/>
</dbReference>
<name>PG095_MONPV</name>
<reference key="1">
    <citation type="journal article" date="2013" name="Am. J. Trop. Med. Hyg.">
        <title>Detection of human monkeypox in the republic of the congo following intensive community education.</title>
        <authorList>
            <person name="Reynolds M.G."/>
            <person name="Emerson G.L."/>
            <person name="Pukuta E."/>
            <person name="Karhemere S."/>
            <person name="Muyembe J.J."/>
            <person name="Bikindou A."/>
            <person name="McCollum A.M."/>
            <person name="Moses C."/>
            <person name="Wilkins K."/>
            <person name="Zhao H."/>
            <person name="Damon I.K."/>
            <person name="Karem K.L."/>
            <person name="Li Y."/>
            <person name="Carroll D.S."/>
            <person name="Mombouli J.V."/>
        </authorList>
    </citation>
    <scope>NUCLEOTIDE SEQUENCE</scope>
    <source>
        <strain>ROC2010</strain>
    </source>
</reference>
<reference key="2">
    <citation type="journal article" date="2022" name="J. Infect. Dis.">
        <title>Exportation of Monkeypox virus from the African continent.</title>
        <authorList>
            <person name="Mauldin M.R."/>
            <person name="McCollum A.M."/>
            <person name="Nakazawa Y.J."/>
            <person name="Mandra A."/>
            <person name="Whitehouse E.R."/>
            <person name="Davidson W."/>
            <person name="Zhao H."/>
            <person name="Gao J."/>
            <person name="Li Y."/>
            <person name="Doty J."/>
            <person name="Yinka-Ogunleye A."/>
            <person name="Akinpelu A."/>
            <person name="Aruna O."/>
            <person name="Naidoo D."/>
            <person name="Lewandowski K."/>
            <person name="Afrough B."/>
            <person name="Graham V."/>
            <person name="Aarons E."/>
            <person name="Hewson R."/>
            <person name="Vipond R."/>
            <person name="Dunning J."/>
            <person name="Chand M."/>
            <person name="Brown C."/>
            <person name="Cohen-Gihon I."/>
            <person name="Erez N."/>
            <person name="Shifman O."/>
            <person name="Israeli O."/>
            <person name="Sharon M."/>
            <person name="Schwartz E."/>
            <person name="Beth-Din A."/>
            <person name="Zvi A."/>
            <person name="Mak T.M."/>
            <person name="Ng Y.K."/>
            <person name="Cui L."/>
            <person name="Lin R.T.P."/>
            <person name="Olson V.A."/>
            <person name="Brooks T."/>
            <person name="Paran N."/>
            <person name="Ihekweazu C."/>
            <person name="Reynolds M.G."/>
        </authorList>
    </citation>
    <scope>NUCLEOTIDE SEQUENCE [LARGE SCALE GENOMIC DNA]</scope>
    <source>
        <strain>MPXV-M5312_HM12_Rivers</strain>
    </source>
</reference>
<sequence>MGAAASIQTTVNTLSERISSKLEQEANASAQTKCDIEIGNFYIRQNHGCNITVKNMCSADADAQLDAVLSAATETYSGLTPEQKAYVPAMFTAALNIQTSVNTVVRDFENYVKQTCNSSAVVDNKLKIQNVIIDECYGAPGSPTNLEFINTGSSKGNCAIKALMQLTTKATTQIAPRQVAGTGVQFYMIVIGVIILAALFMYYAKRMLFTSTNDKIKLILANKENVHWTTYMDTFFRTSPMIIATTDIQN</sequence>
<accession>M1LBP0</accession>
<keyword id="KW-0002">3D-structure</keyword>
<keyword id="KW-1015">Disulfide bond</keyword>
<keyword id="KW-0945">Host-virus interaction</keyword>
<keyword id="KW-0426">Late protein</keyword>
<keyword id="KW-0449">Lipoprotein</keyword>
<keyword id="KW-0472">Membrane</keyword>
<keyword id="KW-0519">Myristate</keyword>
<keyword id="KW-1185">Reference proteome</keyword>
<keyword id="KW-0812">Transmembrane</keyword>
<keyword id="KW-1133">Transmembrane helix</keyword>
<keyword id="KW-1161">Viral attachment to host cell</keyword>
<keyword id="KW-0261">Viral envelope protein</keyword>
<keyword id="KW-1162">Viral penetration into host cytoplasm</keyword>
<keyword id="KW-0946">Virion</keyword>
<keyword id="KW-1160">Virus entry into host cell</keyword>
<evidence type="ECO:0000250" key="1">
    <source>
        <dbReference type="UniProtKB" id="P07612"/>
    </source>
</evidence>
<evidence type="ECO:0000255" key="2"/>
<evidence type="ECO:0000305" key="3"/>
<evidence type="ECO:0000312" key="4">
    <source>
        <dbReference type="EMBL" id="AGF36984.1"/>
    </source>
</evidence>
<organismHost>
    <name type="scientific">Cynomys gunnisoni</name>
    <name type="common">Gunnison's prairie dog</name>
    <name type="synonym">Spermophilus gunnisoni</name>
    <dbReference type="NCBI Taxonomy" id="45479"/>
</organismHost>
<organismHost>
    <name type="scientific">Cynomys leucurus</name>
    <name type="common">White-tailed prairie dog</name>
    <dbReference type="NCBI Taxonomy" id="99825"/>
</organismHost>
<organismHost>
    <name type="scientific">Cynomys ludovicianus</name>
    <name type="common">Black-tailed prairie dog</name>
    <dbReference type="NCBI Taxonomy" id="45480"/>
</organismHost>
<organismHost>
    <name type="scientific">Cynomys mexicanus</name>
    <name type="common">Mexican prairie dog</name>
    <dbReference type="NCBI Taxonomy" id="99826"/>
</organismHost>
<organismHost>
    <name type="scientific">Cynomys parvidens</name>
    <name type="common">Utah prairie dog</name>
    <dbReference type="NCBI Taxonomy" id="99827"/>
</organismHost>
<organismHost>
    <name type="scientific">Gliridae</name>
    <name type="common">dormice</name>
    <dbReference type="NCBI Taxonomy" id="30650"/>
</organismHost>
<organismHost>
    <name type="scientific">Heliosciurus ruwenzorii</name>
    <name type="common">Ruwenzori sun squirrel</name>
    <dbReference type="NCBI Taxonomy" id="226685"/>
</organismHost>
<organismHost>
    <name type="scientific">Homo sapiens</name>
    <name type="common">Human</name>
    <dbReference type="NCBI Taxonomy" id="9606"/>
</organismHost>
<organismHost>
    <name type="scientific">Mus musculus</name>
    <name type="common">Mouse</name>
    <dbReference type="NCBI Taxonomy" id="10090"/>
</organismHost>